<protein>
    <recommendedName>
        <fullName evidence="1">DNA-directed RNA polymerase subunit Rpo3</fullName>
        <ecNumber evidence="1">2.7.7.6</ecNumber>
    </recommendedName>
    <alternativeName>
        <fullName evidence="1">DNA-directed RNA polymerase subunit D</fullName>
    </alternativeName>
</protein>
<reference key="1">
    <citation type="submission" date="2007-04" db="EMBL/GenBank/DDBJ databases">
        <title>Complete sequence of Pyrobaculum arsenaticum DSM 13514.</title>
        <authorList>
            <consortium name="US DOE Joint Genome Institute"/>
            <person name="Copeland A."/>
            <person name="Lucas S."/>
            <person name="Lapidus A."/>
            <person name="Barry K."/>
            <person name="Glavina del Rio T."/>
            <person name="Dalin E."/>
            <person name="Tice H."/>
            <person name="Pitluck S."/>
            <person name="Chain P."/>
            <person name="Malfatti S."/>
            <person name="Shin M."/>
            <person name="Vergez L."/>
            <person name="Schmutz J."/>
            <person name="Larimer F."/>
            <person name="Land M."/>
            <person name="Hauser L."/>
            <person name="Kyrpides N."/>
            <person name="Mikhailova N."/>
            <person name="Cozen A.E."/>
            <person name="Fitz-Gibbon S.T."/>
            <person name="House C.H."/>
            <person name="Saltikov C."/>
            <person name="Lowe T.M."/>
            <person name="Richardson P."/>
        </authorList>
    </citation>
    <scope>NUCLEOTIDE SEQUENCE [LARGE SCALE GENOMIC DNA]</scope>
    <source>
        <strain>ATCC 700994 / DSM 13514 / JCM 11321 / PZ6</strain>
    </source>
</reference>
<evidence type="ECO:0000255" key="1">
    <source>
        <dbReference type="HAMAP-Rule" id="MF_00320"/>
    </source>
</evidence>
<sequence>MPRVSIVEKSQLFLKAIVEGVPPSLVNSLRRVIISELPVMAIDTVVVVNNTSVMYDEFLAQRLGLIPLTTPLHSLPTYEECATGVADPTECGTRLVLQVTADGDVTVYSGDLTSERPDVVPVYKDIPIVKLVKGQSIVIEAYAKLGIAKDHAKWQAATASYYYYPKVIIKDEKCREICKEICPDLEDPVKCTFNKAWTCKDLCKGGLDVEWEKNKYVFWVESFGNYGVDVALKEAFRILKRKFEAFTEELVKKASSGER</sequence>
<name>RPO3_PYRAR</name>
<keyword id="KW-0963">Cytoplasm</keyword>
<keyword id="KW-0240">DNA-directed RNA polymerase</keyword>
<keyword id="KW-0548">Nucleotidyltransferase</keyword>
<keyword id="KW-0804">Transcription</keyword>
<keyword id="KW-0808">Transferase</keyword>
<accession>A4WNA4</accession>
<comment type="function">
    <text evidence="1">DNA-dependent RNA polymerase (RNAP) catalyzes the transcription of DNA into RNA using the four ribonucleoside triphosphates as substrates.</text>
</comment>
<comment type="catalytic activity">
    <reaction evidence="1">
        <text>RNA(n) + a ribonucleoside 5'-triphosphate = RNA(n+1) + diphosphate</text>
        <dbReference type="Rhea" id="RHEA:21248"/>
        <dbReference type="Rhea" id="RHEA-COMP:14527"/>
        <dbReference type="Rhea" id="RHEA-COMP:17342"/>
        <dbReference type="ChEBI" id="CHEBI:33019"/>
        <dbReference type="ChEBI" id="CHEBI:61557"/>
        <dbReference type="ChEBI" id="CHEBI:140395"/>
        <dbReference type="EC" id="2.7.7.6"/>
    </reaction>
</comment>
<comment type="subunit">
    <text evidence="1">Part of the RNA polymerase complex.</text>
</comment>
<comment type="subcellular location">
    <subcellularLocation>
        <location evidence="1">Cytoplasm</location>
    </subcellularLocation>
</comment>
<comment type="similarity">
    <text evidence="1">Belongs to the archaeal Rpo3/eukaryotic RPB3 RNA polymerase subunit family.</text>
</comment>
<organism>
    <name type="scientific">Pyrobaculum arsenaticum (strain DSM 13514 / JCM 11321 / PZ6)</name>
    <dbReference type="NCBI Taxonomy" id="340102"/>
    <lineage>
        <taxon>Archaea</taxon>
        <taxon>Thermoproteota</taxon>
        <taxon>Thermoprotei</taxon>
        <taxon>Thermoproteales</taxon>
        <taxon>Thermoproteaceae</taxon>
        <taxon>Pyrobaculum</taxon>
    </lineage>
</organism>
<proteinExistence type="inferred from homology"/>
<dbReference type="EC" id="2.7.7.6" evidence="1"/>
<dbReference type="EMBL" id="CP000660">
    <property type="protein sequence ID" value="ABP51871.1"/>
    <property type="molecule type" value="Genomic_DNA"/>
</dbReference>
<dbReference type="SMR" id="A4WNA4"/>
<dbReference type="STRING" id="340102.Pars_2327"/>
<dbReference type="KEGG" id="pas:Pars_2327"/>
<dbReference type="HOGENOM" id="CLU_038421_3_1_2"/>
<dbReference type="OrthoDB" id="84933at2157"/>
<dbReference type="PhylomeDB" id="A4WNA4"/>
<dbReference type="Proteomes" id="UP000001567">
    <property type="component" value="Chromosome"/>
</dbReference>
<dbReference type="GO" id="GO:0005737">
    <property type="term" value="C:cytoplasm"/>
    <property type="evidence" value="ECO:0007669"/>
    <property type="project" value="UniProtKB-SubCell"/>
</dbReference>
<dbReference type="GO" id="GO:0000428">
    <property type="term" value="C:DNA-directed RNA polymerase complex"/>
    <property type="evidence" value="ECO:0007669"/>
    <property type="project" value="UniProtKB-KW"/>
</dbReference>
<dbReference type="GO" id="GO:0003677">
    <property type="term" value="F:DNA binding"/>
    <property type="evidence" value="ECO:0007669"/>
    <property type="project" value="UniProtKB-UniRule"/>
</dbReference>
<dbReference type="GO" id="GO:0003899">
    <property type="term" value="F:DNA-directed RNA polymerase activity"/>
    <property type="evidence" value="ECO:0007669"/>
    <property type="project" value="UniProtKB-UniRule"/>
</dbReference>
<dbReference type="GO" id="GO:0051536">
    <property type="term" value="F:iron-sulfur cluster binding"/>
    <property type="evidence" value="ECO:0007669"/>
    <property type="project" value="UniProtKB-UniRule"/>
</dbReference>
<dbReference type="GO" id="GO:0046983">
    <property type="term" value="F:protein dimerization activity"/>
    <property type="evidence" value="ECO:0007669"/>
    <property type="project" value="InterPro"/>
</dbReference>
<dbReference type="GO" id="GO:0006351">
    <property type="term" value="P:DNA-templated transcription"/>
    <property type="evidence" value="ECO:0007669"/>
    <property type="project" value="UniProtKB-UniRule"/>
</dbReference>
<dbReference type="Gene3D" id="3.30.70.3110">
    <property type="match status" value="1"/>
</dbReference>
<dbReference type="Gene3D" id="2.170.120.12">
    <property type="entry name" value="DNA-directed RNA polymerase, insert domain"/>
    <property type="match status" value="1"/>
</dbReference>
<dbReference type="Gene3D" id="3.30.1360.10">
    <property type="entry name" value="RNA polymerase, RBP11-like subunit"/>
    <property type="match status" value="1"/>
</dbReference>
<dbReference type="HAMAP" id="MF_00320">
    <property type="entry name" value="RNApol_arch_Rpo3"/>
    <property type="match status" value="1"/>
</dbReference>
<dbReference type="InterPro" id="IPR001514">
    <property type="entry name" value="DNA-dir_RNA_pol_30-40kDasu_CS"/>
</dbReference>
<dbReference type="InterPro" id="IPR011262">
    <property type="entry name" value="DNA-dir_RNA_pol_insert"/>
</dbReference>
<dbReference type="InterPro" id="IPR011263">
    <property type="entry name" value="DNA-dir_RNA_pol_RpoA/D/Rpb3"/>
</dbReference>
<dbReference type="InterPro" id="IPR036603">
    <property type="entry name" value="RBP11-like"/>
</dbReference>
<dbReference type="InterPro" id="IPR022842">
    <property type="entry name" value="RNAP_Rpo3/Rpb3/RPAC1"/>
</dbReference>
<dbReference type="InterPro" id="IPR036643">
    <property type="entry name" value="RNApol_insert_sf"/>
</dbReference>
<dbReference type="InterPro" id="IPR050518">
    <property type="entry name" value="Rpo3/RPB3_RNA_Pol_subunit"/>
</dbReference>
<dbReference type="NCBIfam" id="NF001988">
    <property type="entry name" value="PRK00783.1"/>
    <property type="match status" value="1"/>
</dbReference>
<dbReference type="PANTHER" id="PTHR11800">
    <property type="entry name" value="DNA-DIRECTED RNA POLYMERASE"/>
    <property type="match status" value="1"/>
</dbReference>
<dbReference type="PANTHER" id="PTHR11800:SF2">
    <property type="entry name" value="DNA-DIRECTED RNA POLYMERASE II SUBUNIT RPB3"/>
    <property type="match status" value="1"/>
</dbReference>
<dbReference type="Pfam" id="PF01000">
    <property type="entry name" value="RNA_pol_A_bac"/>
    <property type="match status" value="1"/>
</dbReference>
<dbReference type="Pfam" id="PF01193">
    <property type="entry name" value="RNA_pol_L"/>
    <property type="match status" value="1"/>
</dbReference>
<dbReference type="SMART" id="SM00662">
    <property type="entry name" value="RPOLD"/>
    <property type="match status" value="1"/>
</dbReference>
<dbReference type="SUPFAM" id="SSF56553">
    <property type="entry name" value="Insert subdomain of RNA polymerase alpha subunit"/>
    <property type="match status" value="1"/>
</dbReference>
<dbReference type="SUPFAM" id="SSF55257">
    <property type="entry name" value="RBP11-like subunits of RNA polymerase"/>
    <property type="match status" value="1"/>
</dbReference>
<dbReference type="PROSITE" id="PS00446">
    <property type="entry name" value="RNA_POL_D_30KD"/>
    <property type="match status" value="1"/>
</dbReference>
<feature type="chain" id="PRO_1000005790" description="DNA-directed RNA polymerase subunit Rpo3">
    <location>
        <begin position="1"/>
        <end position="259"/>
    </location>
</feature>
<gene>
    <name evidence="1" type="primary">rpo3</name>
    <name evidence="1" type="synonym">rpoD</name>
    <name type="ordered locus">Pars_2327</name>
</gene>